<protein>
    <recommendedName>
        <fullName>UPF0416 protein RBE_1121</fullName>
    </recommendedName>
</protein>
<feature type="chain" id="PRO_0000279867" description="UPF0416 protein RBE_1121">
    <location>
        <begin position="1"/>
        <end position="163"/>
    </location>
</feature>
<accession>Q1RHG2</accession>
<gene>
    <name type="ordered locus">RBE_1121</name>
</gene>
<name>Y1121_RICBR</name>
<comment type="similarity">
    <text evidence="1">Belongs to the UPF0416 family.</text>
</comment>
<sequence>MFSKMFNYFASSSKTHLDNTQESAINCGQHSAEAASYAVKTLPQILLGLITFKEISGSVMTGYAFGFALPEFAKVIVKSLASTIFFHPTASMVGTVAVTVAANSENVVECIKNTAHALYDAGSTVYEGTLCAVNGAAAAATFVYDNVCSTDVQLSGNAIEAVL</sequence>
<evidence type="ECO:0000305" key="1"/>
<reference key="1">
    <citation type="journal article" date="2006" name="PLoS Genet.">
        <title>Genome sequence of Rickettsia bellii illuminates the role of amoebae in gene exchanges between intracellular pathogens.</title>
        <authorList>
            <person name="Ogata H."/>
            <person name="La Scola B."/>
            <person name="Audic S."/>
            <person name="Renesto P."/>
            <person name="Blanc G."/>
            <person name="Robert C."/>
            <person name="Fournier P.-E."/>
            <person name="Claverie J.-M."/>
            <person name="Raoult D."/>
        </authorList>
    </citation>
    <scope>NUCLEOTIDE SEQUENCE [LARGE SCALE GENOMIC DNA]</scope>
    <source>
        <strain>RML369-C</strain>
    </source>
</reference>
<proteinExistence type="inferred from homology"/>
<organism>
    <name type="scientific">Rickettsia bellii (strain RML369-C)</name>
    <dbReference type="NCBI Taxonomy" id="336407"/>
    <lineage>
        <taxon>Bacteria</taxon>
        <taxon>Pseudomonadati</taxon>
        <taxon>Pseudomonadota</taxon>
        <taxon>Alphaproteobacteria</taxon>
        <taxon>Rickettsiales</taxon>
        <taxon>Rickettsiaceae</taxon>
        <taxon>Rickettsieae</taxon>
        <taxon>Rickettsia</taxon>
        <taxon>belli group</taxon>
    </lineage>
</organism>
<dbReference type="EMBL" id="CP000087">
    <property type="protein sequence ID" value="ABE05202.1"/>
    <property type="molecule type" value="Genomic_DNA"/>
</dbReference>
<dbReference type="RefSeq" id="WP_011477780.1">
    <property type="nucleotide sequence ID" value="NC_007940.1"/>
</dbReference>
<dbReference type="KEGG" id="rbe:RBE_1121"/>
<dbReference type="HOGENOM" id="CLU_1569490_0_0_5"/>
<dbReference type="Proteomes" id="UP000001951">
    <property type="component" value="Chromosome"/>
</dbReference>